<gene>
    <name evidence="1" type="primary">psb28</name>
    <name type="ordered locus">P9515_10091</name>
</gene>
<keyword id="KW-0472">Membrane</keyword>
<keyword id="KW-0602">Photosynthesis</keyword>
<keyword id="KW-0604">Photosystem II</keyword>
<keyword id="KW-0793">Thylakoid</keyword>
<proteinExistence type="inferred from homology"/>
<dbReference type="EMBL" id="CP000552">
    <property type="protein sequence ID" value="ABM72216.1"/>
    <property type="molecule type" value="Genomic_DNA"/>
</dbReference>
<dbReference type="RefSeq" id="WP_011820317.1">
    <property type="nucleotide sequence ID" value="NC_008817.1"/>
</dbReference>
<dbReference type="SMR" id="A2BWQ5"/>
<dbReference type="STRING" id="167542.P9515_10091"/>
<dbReference type="GeneID" id="60201670"/>
<dbReference type="KEGG" id="pmc:P9515_10091"/>
<dbReference type="eggNOG" id="ENOG5031GDS">
    <property type="taxonomic scope" value="Bacteria"/>
</dbReference>
<dbReference type="HOGENOM" id="CLU_137323_1_0_3"/>
<dbReference type="OrthoDB" id="559598at2"/>
<dbReference type="Proteomes" id="UP000001589">
    <property type="component" value="Chromosome"/>
</dbReference>
<dbReference type="GO" id="GO:0009654">
    <property type="term" value="C:photosystem II oxygen evolving complex"/>
    <property type="evidence" value="ECO:0007669"/>
    <property type="project" value="InterPro"/>
</dbReference>
<dbReference type="GO" id="GO:0031676">
    <property type="term" value="C:plasma membrane-derived thylakoid membrane"/>
    <property type="evidence" value="ECO:0007669"/>
    <property type="project" value="UniProtKB-SubCell"/>
</dbReference>
<dbReference type="GO" id="GO:0015979">
    <property type="term" value="P:photosynthesis"/>
    <property type="evidence" value="ECO:0007669"/>
    <property type="project" value="UniProtKB-UniRule"/>
</dbReference>
<dbReference type="Gene3D" id="2.40.30.220">
    <property type="entry name" value="Photosystem II Psb28"/>
    <property type="match status" value="1"/>
</dbReference>
<dbReference type="HAMAP" id="MF_01370">
    <property type="entry name" value="PSII_Psb28"/>
    <property type="match status" value="1"/>
</dbReference>
<dbReference type="InterPro" id="IPR038676">
    <property type="entry name" value="Psb28_c1_sf"/>
</dbReference>
<dbReference type="InterPro" id="IPR005610">
    <property type="entry name" value="PSII_Psb28_class-1"/>
</dbReference>
<dbReference type="NCBIfam" id="TIGR03047">
    <property type="entry name" value="PS_II_psb28"/>
    <property type="match status" value="1"/>
</dbReference>
<dbReference type="PANTHER" id="PTHR34963">
    <property type="match status" value="1"/>
</dbReference>
<dbReference type="PANTHER" id="PTHR34963:SF2">
    <property type="entry name" value="PHOTOSYSTEM II REACTION CENTER PSB28 PROTEIN, CHLOROPLASTIC"/>
    <property type="match status" value="1"/>
</dbReference>
<dbReference type="Pfam" id="PF03912">
    <property type="entry name" value="Psb28"/>
    <property type="match status" value="1"/>
</dbReference>
<sequence length="117" mass="13235">MAANNLAKIQFYEGTNEPVVPEIRLTRGNDGTTGQAIFIFEKPQALSSITEGEITGMRMIDSEGEIMTREVKVKFVDGEPMYLEGTYIWKTKSDFDRFMRFANSYAKSNGLGYSEKK</sequence>
<reference key="1">
    <citation type="journal article" date="2007" name="PLoS Genet.">
        <title>Patterns and implications of gene gain and loss in the evolution of Prochlorococcus.</title>
        <authorList>
            <person name="Kettler G.C."/>
            <person name="Martiny A.C."/>
            <person name="Huang K."/>
            <person name="Zucker J."/>
            <person name="Coleman M.L."/>
            <person name="Rodrigue S."/>
            <person name="Chen F."/>
            <person name="Lapidus A."/>
            <person name="Ferriera S."/>
            <person name="Johnson J."/>
            <person name="Steglich C."/>
            <person name="Church G.M."/>
            <person name="Richardson P."/>
            <person name="Chisholm S.W."/>
        </authorList>
    </citation>
    <scope>NUCLEOTIDE SEQUENCE [LARGE SCALE GENOMIC DNA]</scope>
    <source>
        <strain>MIT 9515</strain>
    </source>
</reference>
<evidence type="ECO:0000255" key="1">
    <source>
        <dbReference type="HAMAP-Rule" id="MF_01370"/>
    </source>
</evidence>
<accession>A2BWQ5</accession>
<organism>
    <name type="scientific">Prochlorococcus marinus (strain MIT 9515)</name>
    <dbReference type="NCBI Taxonomy" id="167542"/>
    <lineage>
        <taxon>Bacteria</taxon>
        <taxon>Bacillati</taxon>
        <taxon>Cyanobacteriota</taxon>
        <taxon>Cyanophyceae</taxon>
        <taxon>Synechococcales</taxon>
        <taxon>Prochlorococcaceae</taxon>
        <taxon>Prochlorococcus</taxon>
    </lineage>
</organism>
<name>PSB28_PROM5</name>
<comment type="subunit">
    <text evidence="1">Part of the photosystem II complex.</text>
</comment>
<comment type="subcellular location">
    <subcellularLocation>
        <location evidence="1">Cellular thylakoid membrane</location>
        <topology evidence="1">Peripheral membrane protein</topology>
        <orientation evidence="1">Cytoplasmic side</orientation>
    </subcellularLocation>
</comment>
<comment type="similarity">
    <text evidence="1">Belongs to the Psb28 family.</text>
</comment>
<protein>
    <recommendedName>
        <fullName evidence="1">Photosystem II reaction center Psb28 protein</fullName>
    </recommendedName>
    <alternativeName>
        <fullName evidence="1">Photosystem II 13 kDa protein</fullName>
    </alternativeName>
    <alternativeName>
        <fullName evidence="1">Photosystem II reaction center W protein</fullName>
    </alternativeName>
</protein>
<feature type="chain" id="PRO_1000068189" description="Photosystem II reaction center Psb28 protein">
    <location>
        <begin position="1"/>
        <end position="117"/>
    </location>
</feature>